<dbReference type="EC" id="2.7.7.6" evidence="1"/>
<dbReference type="EMBL" id="CP001139">
    <property type="protein sequence ID" value="ACH66489.1"/>
    <property type="molecule type" value="Genomic_DNA"/>
</dbReference>
<dbReference type="RefSeq" id="WP_012533765.1">
    <property type="nucleotide sequence ID" value="NC_011184.1"/>
</dbReference>
<dbReference type="SMR" id="B5FC88"/>
<dbReference type="KEGG" id="vfm:VFMJ11_2530"/>
<dbReference type="HOGENOM" id="CLU_000524_4_0_6"/>
<dbReference type="Proteomes" id="UP000001857">
    <property type="component" value="Chromosome I"/>
</dbReference>
<dbReference type="GO" id="GO:0000428">
    <property type="term" value="C:DNA-directed RNA polymerase complex"/>
    <property type="evidence" value="ECO:0007669"/>
    <property type="project" value="UniProtKB-KW"/>
</dbReference>
<dbReference type="GO" id="GO:0003677">
    <property type="term" value="F:DNA binding"/>
    <property type="evidence" value="ECO:0007669"/>
    <property type="project" value="UniProtKB-UniRule"/>
</dbReference>
<dbReference type="GO" id="GO:0003899">
    <property type="term" value="F:DNA-directed RNA polymerase activity"/>
    <property type="evidence" value="ECO:0007669"/>
    <property type="project" value="UniProtKB-UniRule"/>
</dbReference>
<dbReference type="GO" id="GO:0032549">
    <property type="term" value="F:ribonucleoside binding"/>
    <property type="evidence" value="ECO:0007669"/>
    <property type="project" value="InterPro"/>
</dbReference>
<dbReference type="GO" id="GO:0006351">
    <property type="term" value="P:DNA-templated transcription"/>
    <property type="evidence" value="ECO:0007669"/>
    <property type="project" value="UniProtKB-UniRule"/>
</dbReference>
<dbReference type="CDD" id="cd00653">
    <property type="entry name" value="RNA_pol_B_RPB2"/>
    <property type="match status" value="1"/>
</dbReference>
<dbReference type="FunFam" id="2.40.270.10:FF:000003">
    <property type="entry name" value="DNA-directed RNA polymerase subunit beta"/>
    <property type="match status" value="1"/>
</dbReference>
<dbReference type="FunFam" id="2.40.270.10:FF:000004">
    <property type="entry name" value="DNA-directed RNA polymerase subunit beta"/>
    <property type="match status" value="1"/>
</dbReference>
<dbReference type="FunFam" id="2.40.50.100:FF:000006">
    <property type="entry name" value="DNA-directed RNA polymerase subunit beta"/>
    <property type="match status" value="1"/>
</dbReference>
<dbReference type="FunFam" id="2.40.50.150:FF:000001">
    <property type="entry name" value="DNA-directed RNA polymerase subunit beta"/>
    <property type="match status" value="1"/>
</dbReference>
<dbReference type="FunFam" id="3.90.1100.10:FF:000002">
    <property type="entry name" value="DNA-directed RNA polymerase subunit beta"/>
    <property type="match status" value="1"/>
</dbReference>
<dbReference type="FunFam" id="3.90.1110.10:FF:000001">
    <property type="entry name" value="DNA-directed RNA polymerase subunit beta"/>
    <property type="match status" value="1"/>
</dbReference>
<dbReference type="FunFam" id="3.90.1110.10:FF:000004">
    <property type="entry name" value="DNA-directed RNA polymerase subunit beta"/>
    <property type="match status" value="1"/>
</dbReference>
<dbReference type="FunFam" id="3.90.1800.10:FF:000001">
    <property type="entry name" value="DNA-directed RNA polymerase subunit beta"/>
    <property type="match status" value="1"/>
</dbReference>
<dbReference type="Gene3D" id="2.40.50.100">
    <property type="match status" value="1"/>
</dbReference>
<dbReference type="Gene3D" id="2.40.50.150">
    <property type="match status" value="1"/>
</dbReference>
<dbReference type="Gene3D" id="3.90.1100.10">
    <property type="match status" value="2"/>
</dbReference>
<dbReference type="Gene3D" id="2.30.150.10">
    <property type="entry name" value="DNA-directed RNA polymerase, beta subunit, external 1 domain"/>
    <property type="match status" value="1"/>
</dbReference>
<dbReference type="Gene3D" id="2.40.270.10">
    <property type="entry name" value="DNA-directed RNA polymerase, subunit 2, domain 6"/>
    <property type="match status" value="2"/>
</dbReference>
<dbReference type="Gene3D" id="3.90.1800.10">
    <property type="entry name" value="RNA polymerase alpha subunit dimerisation domain"/>
    <property type="match status" value="1"/>
</dbReference>
<dbReference type="Gene3D" id="3.90.1110.10">
    <property type="entry name" value="RNA polymerase Rpb2, domain 2"/>
    <property type="match status" value="1"/>
</dbReference>
<dbReference type="HAMAP" id="MF_01321">
    <property type="entry name" value="RNApol_bact_RpoB"/>
    <property type="match status" value="1"/>
</dbReference>
<dbReference type="InterPro" id="IPR042107">
    <property type="entry name" value="DNA-dir_RNA_pol_bsu_ext_1_sf"/>
</dbReference>
<dbReference type="InterPro" id="IPR019462">
    <property type="entry name" value="DNA-dir_RNA_pol_bsu_external_1"/>
</dbReference>
<dbReference type="InterPro" id="IPR015712">
    <property type="entry name" value="DNA-dir_RNA_pol_su2"/>
</dbReference>
<dbReference type="InterPro" id="IPR007120">
    <property type="entry name" value="DNA-dir_RNAP_su2_dom"/>
</dbReference>
<dbReference type="InterPro" id="IPR037033">
    <property type="entry name" value="DNA-dir_RNAP_su2_hyb_sf"/>
</dbReference>
<dbReference type="InterPro" id="IPR010243">
    <property type="entry name" value="RNA_pol_bsu_bac"/>
</dbReference>
<dbReference type="InterPro" id="IPR007121">
    <property type="entry name" value="RNA_pol_bsu_CS"/>
</dbReference>
<dbReference type="InterPro" id="IPR007644">
    <property type="entry name" value="RNA_pol_bsu_protrusion"/>
</dbReference>
<dbReference type="InterPro" id="IPR007642">
    <property type="entry name" value="RNA_pol_Rpb2_2"/>
</dbReference>
<dbReference type="InterPro" id="IPR037034">
    <property type="entry name" value="RNA_pol_Rpb2_2_sf"/>
</dbReference>
<dbReference type="InterPro" id="IPR007645">
    <property type="entry name" value="RNA_pol_Rpb2_3"/>
</dbReference>
<dbReference type="InterPro" id="IPR007641">
    <property type="entry name" value="RNA_pol_Rpb2_7"/>
</dbReference>
<dbReference type="InterPro" id="IPR014724">
    <property type="entry name" value="RNA_pol_RPB2_OB-fold"/>
</dbReference>
<dbReference type="NCBIfam" id="NF001616">
    <property type="entry name" value="PRK00405.1"/>
    <property type="match status" value="1"/>
</dbReference>
<dbReference type="NCBIfam" id="TIGR02013">
    <property type="entry name" value="rpoB"/>
    <property type="match status" value="1"/>
</dbReference>
<dbReference type="PANTHER" id="PTHR20856">
    <property type="entry name" value="DNA-DIRECTED RNA POLYMERASE I SUBUNIT 2"/>
    <property type="match status" value="1"/>
</dbReference>
<dbReference type="Pfam" id="PF04563">
    <property type="entry name" value="RNA_pol_Rpb2_1"/>
    <property type="match status" value="1"/>
</dbReference>
<dbReference type="Pfam" id="PF04561">
    <property type="entry name" value="RNA_pol_Rpb2_2"/>
    <property type="match status" value="2"/>
</dbReference>
<dbReference type="Pfam" id="PF04565">
    <property type="entry name" value="RNA_pol_Rpb2_3"/>
    <property type="match status" value="1"/>
</dbReference>
<dbReference type="Pfam" id="PF10385">
    <property type="entry name" value="RNA_pol_Rpb2_45"/>
    <property type="match status" value="1"/>
</dbReference>
<dbReference type="Pfam" id="PF00562">
    <property type="entry name" value="RNA_pol_Rpb2_6"/>
    <property type="match status" value="1"/>
</dbReference>
<dbReference type="Pfam" id="PF04560">
    <property type="entry name" value="RNA_pol_Rpb2_7"/>
    <property type="match status" value="1"/>
</dbReference>
<dbReference type="SUPFAM" id="SSF64484">
    <property type="entry name" value="beta and beta-prime subunits of DNA dependent RNA-polymerase"/>
    <property type="match status" value="1"/>
</dbReference>
<dbReference type="PROSITE" id="PS01166">
    <property type="entry name" value="RNA_POL_BETA"/>
    <property type="match status" value="1"/>
</dbReference>
<reference key="1">
    <citation type="submission" date="2008-08" db="EMBL/GenBank/DDBJ databases">
        <title>Complete sequence of Vibrio fischeri strain MJ11.</title>
        <authorList>
            <person name="Mandel M.J."/>
            <person name="Stabb E.V."/>
            <person name="Ruby E.G."/>
            <person name="Ferriera S."/>
            <person name="Johnson J."/>
            <person name="Kravitz S."/>
            <person name="Beeson K."/>
            <person name="Sutton G."/>
            <person name="Rogers Y.-H."/>
            <person name="Friedman R."/>
            <person name="Frazier M."/>
            <person name="Venter J.C."/>
        </authorList>
    </citation>
    <scope>NUCLEOTIDE SEQUENCE [LARGE SCALE GENOMIC DNA]</scope>
    <source>
        <strain>MJ11</strain>
    </source>
</reference>
<accession>B5FC88</accession>
<evidence type="ECO:0000255" key="1">
    <source>
        <dbReference type="HAMAP-Rule" id="MF_01321"/>
    </source>
</evidence>
<organism>
    <name type="scientific">Aliivibrio fischeri (strain MJ11)</name>
    <name type="common">Vibrio fischeri</name>
    <dbReference type="NCBI Taxonomy" id="388396"/>
    <lineage>
        <taxon>Bacteria</taxon>
        <taxon>Pseudomonadati</taxon>
        <taxon>Pseudomonadota</taxon>
        <taxon>Gammaproteobacteria</taxon>
        <taxon>Vibrionales</taxon>
        <taxon>Vibrionaceae</taxon>
        <taxon>Aliivibrio</taxon>
    </lineage>
</organism>
<name>RPOB_ALIFM</name>
<gene>
    <name evidence="1" type="primary">rpoB</name>
    <name type="ordered locus">VFMJ11_2530</name>
</gene>
<feature type="chain" id="PRO_1000141748" description="DNA-directed RNA polymerase subunit beta">
    <location>
        <begin position="1"/>
        <end position="1342"/>
    </location>
</feature>
<protein>
    <recommendedName>
        <fullName evidence="1">DNA-directed RNA polymerase subunit beta</fullName>
        <shortName evidence="1">RNAP subunit beta</shortName>
        <ecNumber evidence="1">2.7.7.6</ecNumber>
    </recommendedName>
    <alternativeName>
        <fullName evidence="1">RNA polymerase subunit beta</fullName>
    </alternativeName>
    <alternativeName>
        <fullName evidence="1">Transcriptase subunit beta</fullName>
    </alternativeName>
</protein>
<keyword id="KW-0240">DNA-directed RNA polymerase</keyword>
<keyword id="KW-0548">Nucleotidyltransferase</keyword>
<keyword id="KW-0804">Transcription</keyword>
<keyword id="KW-0808">Transferase</keyword>
<sequence>MVYSYTEKKRIRKDFGKRPQVLDIPYLLSIQLDSFTKFIEQDPEGQYGLEAAFRSVFPIQSYNGNSKLEYVSYNLREPEFDVKECQIRGVTYSAPLRVKLRLVVYDKDAPANTVKDIKEQEVYMGEIPLMTDNGTFVINGTERVIVSQLHRSPGVFFDSDKGKTHSSGKVLYNARVIPYRGSWLDFEFDPKDNLFVRIDRRRKLPATIILRALNKTTEEILDLFFDKVVFEVKDQTLMMELLPERLRGETATFDIEANGKVYVEAGRRITARHIRQLTKDDITHIEVPVDYIVGKVASHDYVNEDTGEIIIAANQEFSLEDLANLSQAGYKKIEVLFTNDLDHGAYISDTLRADSTVDRLSALVEIYRMMRPGEPPTKEAAEALFESLFFSEERYDLSTVGRMKFNSSIGRDNDEGAGVLDETDIIEVMRKLIDIRNGIGEVDDIDHLGNRRIRSVGEMAENQFRVGLVRVERAVRERLSLGDLDAIMPQDLINAKPISAAVKEFFGSSQLSQFMDQNNPLSEVTHKRRISALGPGGLTRERAGFEVRDVHATHYGRLCPIETPEGPNIGLINSLSAFAQCNEYGFLETPYRRVVDGQVTDQVDYLSAIEEGTFVIAQANAVLTEEGTFADELIIARQKGESGLHPREHIQYMDVATNQVVSVAASLIPFLEHDDANRALMGANMQRQAVPTLKADKPLVGTGIERNVAVDSGVTAVAKRGGVVQSVDASRIVIKVNEEELVPGEAGIDIYNLTKYTRSNQNTCINQRPTVLPGEPVTRGDVLADGPSTDLGELALGQNMRIAFMPWNGYNFEDSILVSERVVQEDRFTTIHIQELSCVARDTKLGSEEITADIPNVGEAALSKLDESGIVYIGAEVKGGDILVGKVTPKGETQLTPEEKLLRAIFGEKASDVKDSSLRVPNSVSGTIIDVQVFTRDGVEKDKRALEIEQMQLKEAKKDITEEFQILEGGLLARVRTLLVAAGVSEVKLDAMDRKQWLEITLDDEAQQNQLEQLAEQYDELKAEFDKKFETKRRKITQGDDLAPGVLKIVKVYLAVKRRIQPGDKMAGRHGNKGVISKINPVEDMPYDEKGQPVDIVLNPLGVPSRMNIGQILEVHMGLAAKGVGDKINQMLKEQQELHKFRNFLQKVYDLGETRQEVDIAALSDDEVRTLIKNLRGGLPIATPIFDGAPEASIKELLKLVDLPESGQLKLFDGRTGDAFERPVTVGYMYMLKLNHLVDDKMHARSTGSYSLVTQQPLGGKAQFGGQRFGEMEVWALEAYGAAYTLQEMLTVKSDDVNGRTKMYKNIVDGDHRMEPGMPESFNVLLKEIRSLGINIELEDEE</sequence>
<comment type="function">
    <text evidence="1">DNA-dependent RNA polymerase catalyzes the transcription of DNA into RNA using the four ribonucleoside triphosphates as substrates.</text>
</comment>
<comment type="catalytic activity">
    <reaction evidence="1">
        <text>RNA(n) + a ribonucleoside 5'-triphosphate = RNA(n+1) + diphosphate</text>
        <dbReference type="Rhea" id="RHEA:21248"/>
        <dbReference type="Rhea" id="RHEA-COMP:14527"/>
        <dbReference type="Rhea" id="RHEA-COMP:17342"/>
        <dbReference type="ChEBI" id="CHEBI:33019"/>
        <dbReference type="ChEBI" id="CHEBI:61557"/>
        <dbReference type="ChEBI" id="CHEBI:140395"/>
        <dbReference type="EC" id="2.7.7.6"/>
    </reaction>
</comment>
<comment type="subunit">
    <text evidence="1">The RNAP catalytic core consists of 2 alpha, 1 beta, 1 beta' and 1 omega subunit. When a sigma factor is associated with the core the holoenzyme is formed, which can initiate transcription.</text>
</comment>
<comment type="similarity">
    <text evidence="1">Belongs to the RNA polymerase beta chain family.</text>
</comment>
<proteinExistence type="inferred from homology"/>